<protein>
    <recommendedName>
        <fullName evidence="1">Small ribosomal subunit protein uS11</fullName>
    </recommendedName>
    <alternativeName>
        <fullName evidence="3">30S ribosomal protein S11</fullName>
    </alternativeName>
</protein>
<gene>
    <name evidence="1" type="primary">rpsK</name>
    <name type="ordered locus">JTY_3524</name>
</gene>
<sequence length="139" mass="14771">MPPAKKGPATSARKGQKTRRREKKNVPHGAAHIKSTFNNTIVTITDPQGNVIAWASSGHVGFKGSRKSTPFAAQLAAENAARKAQDHGVRKVDVFVKGPGSGRETAIRSLQAAGLEVGAISDVTPQPHNGVRPPNRRRV</sequence>
<name>RS11_MYCBT</name>
<comment type="function">
    <text evidence="1">Located on the platform of the 30S subunit, it bridges several disparate RNA helices of the 16S rRNA. Forms part of the Shine-Dalgarno cleft in the 70S ribosome.</text>
</comment>
<comment type="subunit">
    <text evidence="1">Part of the 30S ribosomal subunit. Interacts with proteins S7 and S18. Binds to IF-3.</text>
</comment>
<comment type="similarity">
    <text evidence="1">Belongs to the universal ribosomal protein uS11 family.</text>
</comment>
<evidence type="ECO:0000255" key="1">
    <source>
        <dbReference type="HAMAP-Rule" id="MF_01310"/>
    </source>
</evidence>
<evidence type="ECO:0000256" key="2">
    <source>
        <dbReference type="SAM" id="MobiDB-lite"/>
    </source>
</evidence>
<evidence type="ECO:0000305" key="3"/>
<organism>
    <name type="scientific">Mycobacterium bovis (strain BCG / Tokyo 172 / ATCC 35737 / TMC 1019)</name>
    <dbReference type="NCBI Taxonomy" id="561275"/>
    <lineage>
        <taxon>Bacteria</taxon>
        <taxon>Bacillati</taxon>
        <taxon>Actinomycetota</taxon>
        <taxon>Actinomycetes</taxon>
        <taxon>Mycobacteriales</taxon>
        <taxon>Mycobacteriaceae</taxon>
        <taxon>Mycobacterium</taxon>
        <taxon>Mycobacterium tuberculosis complex</taxon>
    </lineage>
</organism>
<feature type="chain" id="PRO_1000165558" description="Small ribosomal subunit protein uS11">
    <location>
        <begin position="1"/>
        <end position="139"/>
    </location>
</feature>
<feature type="region of interest" description="Disordered" evidence="2">
    <location>
        <begin position="1"/>
        <end position="33"/>
    </location>
</feature>
<feature type="compositionally biased region" description="Basic residues" evidence="2">
    <location>
        <begin position="14"/>
        <end position="23"/>
    </location>
</feature>
<keyword id="KW-0687">Ribonucleoprotein</keyword>
<keyword id="KW-0689">Ribosomal protein</keyword>
<keyword id="KW-0694">RNA-binding</keyword>
<keyword id="KW-0699">rRNA-binding</keyword>
<dbReference type="EMBL" id="AP010918">
    <property type="protein sequence ID" value="BAH27796.1"/>
    <property type="molecule type" value="Genomic_DNA"/>
</dbReference>
<dbReference type="RefSeq" id="WP_003418357.1">
    <property type="nucleotide sequence ID" value="NZ_CP014566.1"/>
</dbReference>
<dbReference type="SMR" id="C1AHR7"/>
<dbReference type="KEGG" id="mbt:JTY_3524"/>
<dbReference type="HOGENOM" id="CLU_072439_5_0_11"/>
<dbReference type="GO" id="GO:1990904">
    <property type="term" value="C:ribonucleoprotein complex"/>
    <property type="evidence" value="ECO:0007669"/>
    <property type="project" value="UniProtKB-KW"/>
</dbReference>
<dbReference type="GO" id="GO:0005840">
    <property type="term" value="C:ribosome"/>
    <property type="evidence" value="ECO:0007669"/>
    <property type="project" value="UniProtKB-KW"/>
</dbReference>
<dbReference type="GO" id="GO:0019843">
    <property type="term" value="F:rRNA binding"/>
    <property type="evidence" value="ECO:0007669"/>
    <property type="project" value="UniProtKB-UniRule"/>
</dbReference>
<dbReference type="GO" id="GO:0003735">
    <property type="term" value="F:structural constituent of ribosome"/>
    <property type="evidence" value="ECO:0007669"/>
    <property type="project" value="InterPro"/>
</dbReference>
<dbReference type="GO" id="GO:0006412">
    <property type="term" value="P:translation"/>
    <property type="evidence" value="ECO:0007669"/>
    <property type="project" value="UniProtKB-UniRule"/>
</dbReference>
<dbReference type="FunFam" id="3.30.420.80:FF:000001">
    <property type="entry name" value="30S ribosomal protein S11"/>
    <property type="match status" value="1"/>
</dbReference>
<dbReference type="Gene3D" id="3.30.420.80">
    <property type="entry name" value="Ribosomal protein S11"/>
    <property type="match status" value="1"/>
</dbReference>
<dbReference type="HAMAP" id="MF_01310">
    <property type="entry name" value="Ribosomal_uS11"/>
    <property type="match status" value="1"/>
</dbReference>
<dbReference type="InterPro" id="IPR001971">
    <property type="entry name" value="Ribosomal_uS11"/>
</dbReference>
<dbReference type="InterPro" id="IPR019981">
    <property type="entry name" value="Ribosomal_uS11_bac-type"/>
</dbReference>
<dbReference type="InterPro" id="IPR018102">
    <property type="entry name" value="Ribosomal_uS11_CS"/>
</dbReference>
<dbReference type="InterPro" id="IPR036967">
    <property type="entry name" value="Ribosomal_uS11_sf"/>
</dbReference>
<dbReference type="NCBIfam" id="NF003698">
    <property type="entry name" value="PRK05309.1"/>
    <property type="match status" value="1"/>
</dbReference>
<dbReference type="NCBIfam" id="TIGR03632">
    <property type="entry name" value="uS11_bact"/>
    <property type="match status" value="1"/>
</dbReference>
<dbReference type="PANTHER" id="PTHR11759">
    <property type="entry name" value="40S RIBOSOMAL PROTEIN S14/30S RIBOSOMAL PROTEIN S11"/>
    <property type="match status" value="1"/>
</dbReference>
<dbReference type="Pfam" id="PF00411">
    <property type="entry name" value="Ribosomal_S11"/>
    <property type="match status" value="1"/>
</dbReference>
<dbReference type="PIRSF" id="PIRSF002131">
    <property type="entry name" value="Ribosomal_S11"/>
    <property type="match status" value="1"/>
</dbReference>
<dbReference type="SUPFAM" id="SSF53137">
    <property type="entry name" value="Translational machinery components"/>
    <property type="match status" value="1"/>
</dbReference>
<dbReference type="PROSITE" id="PS00054">
    <property type="entry name" value="RIBOSOMAL_S11"/>
    <property type="match status" value="1"/>
</dbReference>
<proteinExistence type="inferred from homology"/>
<accession>C1AHR7</accession>
<reference key="1">
    <citation type="journal article" date="2009" name="Vaccine">
        <title>Whole genome sequence analysis of Mycobacterium bovis bacillus Calmette-Guerin (BCG) Tokyo 172: a comparative study of BCG vaccine substrains.</title>
        <authorList>
            <person name="Seki M."/>
            <person name="Honda I."/>
            <person name="Fujita I."/>
            <person name="Yano I."/>
            <person name="Yamamoto S."/>
            <person name="Koyama A."/>
        </authorList>
    </citation>
    <scope>NUCLEOTIDE SEQUENCE [LARGE SCALE GENOMIC DNA]</scope>
    <source>
        <strain>BCG / Tokyo 172 / ATCC 35737 / TMC 1019</strain>
    </source>
</reference>